<keyword id="KW-0687">Ribonucleoprotein</keyword>
<keyword id="KW-0689">Ribosomal protein</keyword>
<keyword id="KW-0694">RNA-binding</keyword>
<keyword id="KW-0699">rRNA-binding</keyword>
<sequence>MIQQESRLKIADNTGAKEILTIRVLGGSGRRYAGLGDVIVATVKDAIPGGNVKKGEVVKAVIVRTKKETRRPDGSYIKFDENAAVILNSNGEPRGTRIFGPVGRELRDKKFMKIISLAPEVI</sequence>
<organism>
    <name type="scientific">Clavibacter michiganensis subsp. michiganensis (strain NCPPB 382)</name>
    <dbReference type="NCBI Taxonomy" id="443906"/>
    <lineage>
        <taxon>Bacteria</taxon>
        <taxon>Bacillati</taxon>
        <taxon>Actinomycetota</taxon>
        <taxon>Actinomycetes</taxon>
        <taxon>Micrococcales</taxon>
        <taxon>Microbacteriaceae</taxon>
        <taxon>Clavibacter</taxon>
    </lineage>
</organism>
<proteinExistence type="inferred from homology"/>
<feature type="chain" id="PRO_1000055556" description="Large ribosomal subunit protein uL14">
    <location>
        <begin position="1"/>
        <end position="122"/>
    </location>
</feature>
<protein>
    <recommendedName>
        <fullName evidence="1">Large ribosomal subunit protein uL14</fullName>
    </recommendedName>
    <alternativeName>
        <fullName evidence="2">50S ribosomal protein L14</fullName>
    </alternativeName>
</protein>
<comment type="function">
    <text evidence="1">Binds to 23S rRNA. Forms part of two intersubunit bridges in the 70S ribosome.</text>
</comment>
<comment type="subunit">
    <text evidence="1">Part of the 50S ribosomal subunit. Forms a cluster with proteins L3 and L19. In the 70S ribosome, L14 and L19 interact and together make contacts with the 16S rRNA in bridges B5 and B8.</text>
</comment>
<comment type="similarity">
    <text evidence="1">Belongs to the universal ribosomal protein uL14 family.</text>
</comment>
<dbReference type="EMBL" id="AM711867">
    <property type="protein sequence ID" value="CAN02690.1"/>
    <property type="molecule type" value="Genomic_DNA"/>
</dbReference>
<dbReference type="RefSeq" id="WP_012039296.1">
    <property type="nucleotide sequence ID" value="NC_009480.1"/>
</dbReference>
<dbReference type="SMR" id="A5CUA4"/>
<dbReference type="GeneID" id="92984319"/>
<dbReference type="KEGG" id="cmi:CMM_2607"/>
<dbReference type="eggNOG" id="COG0093">
    <property type="taxonomic scope" value="Bacteria"/>
</dbReference>
<dbReference type="HOGENOM" id="CLU_095071_2_1_11"/>
<dbReference type="OrthoDB" id="9806379at2"/>
<dbReference type="Proteomes" id="UP000001564">
    <property type="component" value="Chromosome"/>
</dbReference>
<dbReference type="GO" id="GO:0022625">
    <property type="term" value="C:cytosolic large ribosomal subunit"/>
    <property type="evidence" value="ECO:0007669"/>
    <property type="project" value="TreeGrafter"/>
</dbReference>
<dbReference type="GO" id="GO:0070180">
    <property type="term" value="F:large ribosomal subunit rRNA binding"/>
    <property type="evidence" value="ECO:0007669"/>
    <property type="project" value="TreeGrafter"/>
</dbReference>
<dbReference type="GO" id="GO:0003735">
    <property type="term" value="F:structural constituent of ribosome"/>
    <property type="evidence" value="ECO:0007669"/>
    <property type="project" value="InterPro"/>
</dbReference>
<dbReference type="GO" id="GO:0006412">
    <property type="term" value="P:translation"/>
    <property type="evidence" value="ECO:0007669"/>
    <property type="project" value="UniProtKB-UniRule"/>
</dbReference>
<dbReference type="CDD" id="cd00337">
    <property type="entry name" value="Ribosomal_uL14"/>
    <property type="match status" value="1"/>
</dbReference>
<dbReference type="FunFam" id="2.40.150.20:FF:000001">
    <property type="entry name" value="50S ribosomal protein L14"/>
    <property type="match status" value="1"/>
</dbReference>
<dbReference type="Gene3D" id="2.40.150.20">
    <property type="entry name" value="Ribosomal protein L14"/>
    <property type="match status" value="1"/>
</dbReference>
<dbReference type="HAMAP" id="MF_01367">
    <property type="entry name" value="Ribosomal_uL14"/>
    <property type="match status" value="1"/>
</dbReference>
<dbReference type="InterPro" id="IPR000218">
    <property type="entry name" value="Ribosomal_uL14"/>
</dbReference>
<dbReference type="InterPro" id="IPR005745">
    <property type="entry name" value="Ribosomal_uL14_bac-type"/>
</dbReference>
<dbReference type="InterPro" id="IPR019972">
    <property type="entry name" value="Ribosomal_uL14_CS"/>
</dbReference>
<dbReference type="InterPro" id="IPR036853">
    <property type="entry name" value="Ribosomal_uL14_sf"/>
</dbReference>
<dbReference type="NCBIfam" id="TIGR01067">
    <property type="entry name" value="rplN_bact"/>
    <property type="match status" value="1"/>
</dbReference>
<dbReference type="PANTHER" id="PTHR11761">
    <property type="entry name" value="50S/60S RIBOSOMAL PROTEIN L14/L23"/>
    <property type="match status" value="1"/>
</dbReference>
<dbReference type="PANTHER" id="PTHR11761:SF3">
    <property type="entry name" value="LARGE RIBOSOMAL SUBUNIT PROTEIN UL14M"/>
    <property type="match status" value="1"/>
</dbReference>
<dbReference type="Pfam" id="PF00238">
    <property type="entry name" value="Ribosomal_L14"/>
    <property type="match status" value="1"/>
</dbReference>
<dbReference type="SMART" id="SM01374">
    <property type="entry name" value="Ribosomal_L14"/>
    <property type="match status" value="1"/>
</dbReference>
<dbReference type="SUPFAM" id="SSF50193">
    <property type="entry name" value="Ribosomal protein L14"/>
    <property type="match status" value="1"/>
</dbReference>
<dbReference type="PROSITE" id="PS00049">
    <property type="entry name" value="RIBOSOMAL_L14"/>
    <property type="match status" value="1"/>
</dbReference>
<accession>A5CUA4</accession>
<reference key="1">
    <citation type="journal article" date="2008" name="J. Bacteriol.">
        <title>The genome sequence of the tomato-pathogenic actinomycete Clavibacter michiganensis subsp. michiganensis NCPPB382 reveals a large island involved in pathogenicity.</title>
        <authorList>
            <person name="Gartemann K.-H."/>
            <person name="Abt B."/>
            <person name="Bekel T."/>
            <person name="Burger A."/>
            <person name="Engemann J."/>
            <person name="Fluegel M."/>
            <person name="Gaigalat L."/>
            <person name="Goesmann A."/>
            <person name="Graefen I."/>
            <person name="Kalinowski J."/>
            <person name="Kaup O."/>
            <person name="Kirchner O."/>
            <person name="Krause L."/>
            <person name="Linke B."/>
            <person name="McHardy A."/>
            <person name="Meyer F."/>
            <person name="Pohle S."/>
            <person name="Rueckert C."/>
            <person name="Schneiker S."/>
            <person name="Zellermann E.-M."/>
            <person name="Puehler A."/>
            <person name="Eichenlaub R."/>
            <person name="Kaiser O."/>
            <person name="Bartels D."/>
        </authorList>
    </citation>
    <scope>NUCLEOTIDE SEQUENCE [LARGE SCALE GENOMIC DNA]</scope>
    <source>
        <strain>NCPPB 382</strain>
    </source>
</reference>
<evidence type="ECO:0000255" key="1">
    <source>
        <dbReference type="HAMAP-Rule" id="MF_01367"/>
    </source>
</evidence>
<evidence type="ECO:0000305" key="2"/>
<gene>
    <name evidence="1" type="primary">rplN</name>
    <name type="ordered locus">CMM_2607</name>
</gene>
<name>RL14_CLAM3</name>